<reference key="1">
    <citation type="journal article" date="2004" name="J. Bacteriol.">
        <title>Comparative genomics of two Leptospira interrogans serovars reveals novel insights into physiology and pathogenesis.</title>
        <authorList>
            <person name="Nascimento A.L.T.O."/>
            <person name="Ko A.I."/>
            <person name="Martins E.A.L."/>
            <person name="Monteiro-Vitorello C.B."/>
            <person name="Ho P.L."/>
            <person name="Haake D.A."/>
            <person name="Verjovski-Almeida S."/>
            <person name="Hartskeerl R.A."/>
            <person name="Marques M.V."/>
            <person name="Oliveira M.C."/>
            <person name="Menck C.F.M."/>
            <person name="Leite L.C.C."/>
            <person name="Carrer H."/>
            <person name="Coutinho L.L."/>
            <person name="Degrave W.M."/>
            <person name="Dellagostin O.A."/>
            <person name="El-Dorry H."/>
            <person name="Ferro E.S."/>
            <person name="Ferro M.I.T."/>
            <person name="Furlan L.R."/>
            <person name="Gamberini M."/>
            <person name="Giglioti E.A."/>
            <person name="Goes-Neto A."/>
            <person name="Goldman G.H."/>
            <person name="Goldman M.H.S."/>
            <person name="Harakava R."/>
            <person name="Jeronimo S.M.B."/>
            <person name="Junqueira-de-Azevedo I.L.M."/>
            <person name="Kimura E.T."/>
            <person name="Kuramae E.E."/>
            <person name="Lemos E.G.M."/>
            <person name="Lemos M.V.F."/>
            <person name="Marino C.L."/>
            <person name="Nunes L.R."/>
            <person name="de Oliveira R.C."/>
            <person name="Pereira G.G."/>
            <person name="Reis M.S."/>
            <person name="Schriefer A."/>
            <person name="Siqueira W.J."/>
            <person name="Sommer P."/>
            <person name="Tsai S.M."/>
            <person name="Simpson A.J.G."/>
            <person name="Ferro J.A."/>
            <person name="Camargo L.E.A."/>
            <person name="Kitajima J.P."/>
            <person name="Setubal J.C."/>
            <person name="Van Sluys M.A."/>
        </authorList>
    </citation>
    <scope>NUCLEOTIDE SEQUENCE [LARGE SCALE GENOMIC DNA]</scope>
    <source>
        <strain>Fiocruz L1-130</strain>
    </source>
</reference>
<comment type="function">
    <text evidence="1">Catalyzes the condensation of iminoaspartate with dihydroxyacetone phosphate to form quinolinate.</text>
</comment>
<comment type="catalytic activity">
    <reaction evidence="1">
        <text>iminosuccinate + dihydroxyacetone phosphate = quinolinate + phosphate + 2 H2O + H(+)</text>
        <dbReference type="Rhea" id="RHEA:25888"/>
        <dbReference type="ChEBI" id="CHEBI:15377"/>
        <dbReference type="ChEBI" id="CHEBI:15378"/>
        <dbReference type="ChEBI" id="CHEBI:29959"/>
        <dbReference type="ChEBI" id="CHEBI:43474"/>
        <dbReference type="ChEBI" id="CHEBI:57642"/>
        <dbReference type="ChEBI" id="CHEBI:77875"/>
        <dbReference type="EC" id="2.5.1.72"/>
    </reaction>
    <physiologicalReaction direction="left-to-right" evidence="1">
        <dbReference type="Rhea" id="RHEA:25889"/>
    </physiologicalReaction>
</comment>
<comment type="cofactor">
    <cofactor evidence="1">
        <name>[4Fe-4S] cluster</name>
        <dbReference type="ChEBI" id="CHEBI:49883"/>
    </cofactor>
    <text evidence="1">Binds 1 [4Fe-4S] cluster per subunit.</text>
</comment>
<comment type="pathway">
    <text evidence="1">Cofactor biosynthesis; NAD(+) biosynthesis; quinolinate from iminoaspartate: step 1/1.</text>
</comment>
<comment type="subcellular location">
    <subcellularLocation>
        <location evidence="1">Cytoplasm</location>
    </subcellularLocation>
</comment>
<comment type="similarity">
    <text evidence="1">Belongs to the quinolinate synthase family. Type 2 subfamily.</text>
</comment>
<comment type="sequence caution" evidence="2">
    <conflict type="erroneous initiation">
        <sequence resource="EMBL-CDS" id="AAS71514"/>
    </conflict>
    <text>Extended N-terminus.</text>
</comment>
<gene>
    <name evidence="1" type="primary">nadA</name>
    <name type="ordered locus">LIC_12964</name>
</gene>
<accession>Q72N73</accession>
<dbReference type="EC" id="2.5.1.72" evidence="1"/>
<dbReference type="EMBL" id="AE016823">
    <property type="protein sequence ID" value="AAS71514.1"/>
    <property type="status" value="ALT_INIT"/>
    <property type="molecule type" value="Genomic_DNA"/>
</dbReference>
<dbReference type="RefSeq" id="WP_000853488.1">
    <property type="nucleotide sequence ID" value="NC_005823.1"/>
</dbReference>
<dbReference type="SMR" id="Q72N73"/>
<dbReference type="GeneID" id="61142842"/>
<dbReference type="KEGG" id="lic:LIC_12964"/>
<dbReference type="HOGENOM" id="CLU_047382_0_0_12"/>
<dbReference type="UniPathway" id="UPA00253">
    <property type="reaction ID" value="UER00327"/>
</dbReference>
<dbReference type="Proteomes" id="UP000007037">
    <property type="component" value="Chromosome I"/>
</dbReference>
<dbReference type="GO" id="GO:0005829">
    <property type="term" value="C:cytosol"/>
    <property type="evidence" value="ECO:0007669"/>
    <property type="project" value="TreeGrafter"/>
</dbReference>
<dbReference type="GO" id="GO:0051539">
    <property type="term" value="F:4 iron, 4 sulfur cluster binding"/>
    <property type="evidence" value="ECO:0007669"/>
    <property type="project" value="UniProtKB-KW"/>
</dbReference>
<dbReference type="GO" id="GO:0046872">
    <property type="term" value="F:metal ion binding"/>
    <property type="evidence" value="ECO:0007669"/>
    <property type="project" value="UniProtKB-KW"/>
</dbReference>
<dbReference type="GO" id="GO:0008987">
    <property type="term" value="F:quinolinate synthetase A activity"/>
    <property type="evidence" value="ECO:0007669"/>
    <property type="project" value="UniProtKB-UniRule"/>
</dbReference>
<dbReference type="GO" id="GO:0034628">
    <property type="term" value="P:'de novo' NAD biosynthetic process from L-aspartate"/>
    <property type="evidence" value="ECO:0007669"/>
    <property type="project" value="TreeGrafter"/>
</dbReference>
<dbReference type="Gene3D" id="3.40.50.10800">
    <property type="entry name" value="NadA-like"/>
    <property type="match status" value="3"/>
</dbReference>
<dbReference type="HAMAP" id="MF_00568">
    <property type="entry name" value="NadA_type2"/>
    <property type="match status" value="1"/>
</dbReference>
<dbReference type="InterPro" id="IPR003473">
    <property type="entry name" value="NadA"/>
</dbReference>
<dbReference type="InterPro" id="IPR036094">
    <property type="entry name" value="NadA_sf"/>
</dbReference>
<dbReference type="InterPro" id="IPR023066">
    <property type="entry name" value="Quinolinate_synth_type2"/>
</dbReference>
<dbReference type="NCBIfam" id="TIGR00550">
    <property type="entry name" value="nadA"/>
    <property type="match status" value="1"/>
</dbReference>
<dbReference type="NCBIfam" id="NF006878">
    <property type="entry name" value="PRK09375.1-2"/>
    <property type="match status" value="1"/>
</dbReference>
<dbReference type="NCBIfam" id="NF006879">
    <property type="entry name" value="PRK09375.1-4"/>
    <property type="match status" value="1"/>
</dbReference>
<dbReference type="PANTHER" id="PTHR30573:SF0">
    <property type="entry name" value="QUINOLINATE SYNTHASE, CHLOROPLASTIC"/>
    <property type="match status" value="1"/>
</dbReference>
<dbReference type="PANTHER" id="PTHR30573">
    <property type="entry name" value="QUINOLINATE SYNTHETASE A"/>
    <property type="match status" value="1"/>
</dbReference>
<dbReference type="Pfam" id="PF02445">
    <property type="entry name" value="NadA"/>
    <property type="match status" value="1"/>
</dbReference>
<dbReference type="SUPFAM" id="SSF142754">
    <property type="entry name" value="NadA-like"/>
    <property type="match status" value="1"/>
</dbReference>
<keyword id="KW-0004">4Fe-4S</keyword>
<keyword id="KW-0963">Cytoplasm</keyword>
<keyword id="KW-0408">Iron</keyword>
<keyword id="KW-0411">Iron-sulfur</keyword>
<keyword id="KW-0479">Metal-binding</keyword>
<keyword id="KW-0662">Pyridine nucleotide biosynthesis</keyword>
<keyword id="KW-0808">Transferase</keyword>
<protein>
    <recommendedName>
        <fullName evidence="1">Quinolinate synthase</fullName>
        <ecNumber evidence="1">2.5.1.72</ecNumber>
    </recommendedName>
</protein>
<proteinExistence type="inferred from homology"/>
<organism>
    <name type="scientific">Leptospira interrogans serogroup Icterohaemorrhagiae serovar copenhageni (strain Fiocruz L1-130)</name>
    <dbReference type="NCBI Taxonomy" id="267671"/>
    <lineage>
        <taxon>Bacteria</taxon>
        <taxon>Pseudomonadati</taxon>
        <taxon>Spirochaetota</taxon>
        <taxon>Spirochaetia</taxon>
        <taxon>Leptospirales</taxon>
        <taxon>Leptospiraceae</taxon>
        <taxon>Leptospira</taxon>
    </lineage>
</organism>
<feature type="chain" id="PRO_0000155788" description="Quinolinate synthase">
    <location>
        <begin position="1"/>
        <end position="324"/>
    </location>
</feature>
<feature type="binding site" evidence="1">
    <location>
        <position position="44"/>
    </location>
    <ligand>
        <name>iminosuccinate</name>
        <dbReference type="ChEBI" id="CHEBI:77875"/>
    </ligand>
</feature>
<feature type="binding site" evidence="1">
    <location>
        <position position="62"/>
    </location>
    <ligand>
        <name>iminosuccinate</name>
        <dbReference type="ChEBI" id="CHEBI:77875"/>
    </ligand>
</feature>
<feature type="binding site" evidence="1">
    <location>
        <position position="107"/>
    </location>
    <ligand>
        <name>[4Fe-4S] cluster</name>
        <dbReference type="ChEBI" id="CHEBI:49883"/>
    </ligand>
</feature>
<feature type="binding site" evidence="1">
    <location>
        <begin position="133"/>
        <end position="135"/>
    </location>
    <ligand>
        <name>iminosuccinate</name>
        <dbReference type="ChEBI" id="CHEBI:77875"/>
    </ligand>
</feature>
<feature type="binding site" evidence="1">
    <location>
        <position position="150"/>
    </location>
    <ligand>
        <name>iminosuccinate</name>
        <dbReference type="ChEBI" id="CHEBI:77875"/>
    </ligand>
</feature>
<feature type="binding site" evidence="1">
    <location>
        <position position="192"/>
    </location>
    <ligand>
        <name>[4Fe-4S] cluster</name>
        <dbReference type="ChEBI" id="CHEBI:49883"/>
    </ligand>
</feature>
<feature type="binding site" evidence="1">
    <location>
        <begin position="218"/>
        <end position="220"/>
    </location>
    <ligand>
        <name>iminosuccinate</name>
        <dbReference type="ChEBI" id="CHEBI:77875"/>
    </ligand>
</feature>
<feature type="binding site" evidence="1">
    <location>
        <position position="235"/>
    </location>
    <ligand>
        <name>iminosuccinate</name>
        <dbReference type="ChEBI" id="CHEBI:77875"/>
    </ligand>
</feature>
<feature type="binding site" evidence="1">
    <location>
        <position position="278"/>
    </location>
    <ligand>
        <name>[4Fe-4S] cluster</name>
        <dbReference type="ChEBI" id="CHEBI:49883"/>
    </ligand>
</feature>
<evidence type="ECO:0000255" key="1">
    <source>
        <dbReference type="HAMAP-Rule" id="MF_00568"/>
    </source>
</evidence>
<evidence type="ECO:0000305" key="2"/>
<sequence>MKTLEEVAKALKNTYMEHEVDEKLPLIQEIQRLKKEKNAILLGHNYMTPDVFHGVSDITGDSLYLSKVAADTDADVILFNGVHFMAETAKLMSPQKKVLIADLKAGCSLAESITRQDVIDLKQKYPGVPVVTYVNCTADVKAETDICCTSANALQVVESLESDTVIFLPDRYLAANVQNLTQKKIITHPGSCMVHEMYSAEDIELTRRQFPGVTVISHPECKTEVVDRSDYSGSTSQMSDFIRKSEAKNIFLITECSMGDNLRSEFPDRHFVSTCQVCPHMKKITLEKIRDSLLYDQYEIHLDPEVIEKGRMSVQRMLDLSFKK</sequence>
<name>NADA_LEPIC</name>